<reference key="1">
    <citation type="submission" date="2007-08" db="EMBL/GenBank/DDBJ databases">
        <authorList>
            <consortium name="The Citrobacter koseri Genome Sequencing Project"/>
            <person name="McClelland M."/>
            <person name="Sanderson E.K."/>
            <person name="Porwollik S."/>
            <person name="Spieth J."/>
            <person name="Clifton W.S."/>
            <person name="Latreille P."/>
            <person name="Courtney L."/>
            <person name="Wang C."/>
            <person name="Pepin K."/>
            <person name="Bhonagiri V."/>
            <person name="Nash W."/>
            <person name="Johnson M."/>
            <person name="Thiruvilangam P."/>
            <person name="Wilson R."/>
        </authorList>
    </citation>
    <scope>NUCLEOTIDE SEQUENCE [LARGE SCALE GENOMIC DNA]</scope>
    <source>
        <strain>ATCC BAA-895 / CDC 4225-83 / SGSC4696</strain>
    </source>
</reference>
<sequence length="375" mass="42536">MKFELDTTDGRARRGRLVFDRGVVETPAFMPVGTYGTVKGMTPEEVEATGAQIILGNTFHLWLRPGQEIMKLHGDLHDFMQWKGPILTDSGGFQVFSLGDIRKITEQGVHFRNPINGDPIFLDPEKSMEIQYDLGSDIVMIFDECTPYPADWDYAKRSMEMSLRWAKRSRDRFDGLGNKNALFGIIQGSVYEDLRDISVKGLVEIGFDGYAVGGLAVGEPKEDMHRILEHVCPQIPADKPRYLMGVGKPEDLVEGVRRGIDMFDCVMPTRNARNGHLFVTDGVVKIRNAKHKSDTSPLDAECDCYTCRNYSRAYLHHLDRCNEILGARLNTIHNLRYYQRLMAGLRKAIEEGKLESFVTDFYQRQGRPVPPLNVD</sequence>
<dbReference type="EC" id="2.4.2.29" evidence="1"/>
<dbReference type="EMBL" id="CP000822">
    <property type="protein sequence ID" value="ABV13861.1"/>
    <property type="molecule type" value="Genomic_DNA"/>
</dbReference>
<dbReference type="RefSeq" id="WP_012133574.1">
    <property type="nucleotide sequence ID" value="NC_009792.1"/>
</dbReference>
<dbReference type="SMR" id="A8AK48"/>
<dbReference type="STRING" id="290338.CKO_02755"/>
<dbReference type="GeneID" id="93031949"/>
<dbReference type="KEGG" id="cko:CKO_02755"/>
<dbReference type="HOGENOM" id="CLU_022060_0_1_6"/>
<dbReference type="OrthoDB" id="9805417at2"/>
<dbReference type="UniPathway" id="UPA00392"/>
<dbReference type="Proteomes" id="UP000008148">
    <property type="component" value="Chromosome"/>
</dbReference>
<dbReference type="GO" id="GO:0005829">
    <property type="term" value="C:cytosol"/>
    <property type="evidence" value="ECO:0007669"/>
    <property type="project" value="TreeGrafter"/>
</dbReference>
<dbReference type="GO" id="GO:0046872">
    <property type="term" value="F:metal ion binding"/>
    <property type="evidence" value="ECO:0007669"/>
    <property type="project" value="UniProtKB-KW"/>
</dbReference>
<dbReference type="GO" id="GO:0008479">
    <property type="term" value="F:tRNA-guanosine(34) queuine transglycosylase activity"/>
    <property type="evidence" value="ECO:0007669"/>
    <property type="project" value="UniProtKB-UniRule"/>
</dbReference>
<dbReference type="GO" id="GO:0008616">
    <property type="term" value="P:queuosine biosynthetic process"/>
    <property type="evidence" value="ECO:0007669"/>
    <property type="project" value="UniProtKB-UniRule"/>
</dbReference>
<dbReference type="GO" id="GO:0002099">
    <property type="term" value="P:tRNA wobble guanine modification"/>
    <property type="evidence" value="ECO:0007669"/>
    <property type="project" value="TreeGrafter"/>
</dbReference>
<dbReference type="GO" id="GO:0101030">
    <property type="term" value="P:tRNA-guanine transglycosylation"/>
    <property type="evidence" value="ECO:0007669"/>
    <property type="project" value="InterPro"/>
</dbReference>
<dbReference type="FunFam" id="3.20.20.105:FF:000001">
    <property type="entry name" value="Queuine tRNA-ribosyltransferase"/>
    <property type="match status" value="1"/>
</dbReference>
<dbReference type="Gene3D" id="3.20.20.105">
    <property type="entry name" value="Queuine tRNA-ribosyltransferase-like"/>
    <property type="match status" value="1"/>
</dbReference>
<dbReference type="HAMAP" id="MF_00168">
    <property type="entry name" value="Q_tRNA_Tgt"/>
    <property type="match status" value="1"/>
</dbReference>
<dbReference type="InterPro" id="IPR050076">
    <property type="entry name" value="ArchSynthase1/Queuine_TRR"/>
</dbReference>
<dbReference type="InterPro" id="IPR004803">
    <property type="entry name" value="TGT"/>
</dbReference>
<dbReference type="InterPro" id="IPR036511">
    <property type="entry name" value="TGT-like_sf"/>
</dbReference>
<dbReference type="InterPro" id="IPR002616">
    <property type="entry name" value="tRNA_ribo_trans-like"/>
</dbReference>
<dbReference type="NCBIfam" id="TIGR00430">
    <property type="entry name" value="Q_tRNA_tgt"/>
    <property type="match status" value="1"/>
</dbReference>
<dbReference type="NCBIfam" id="TIGR00449">
    <property type="entry name" value="tgt_general"/>
    <property type="match status" value="1"/>
</dbReference>
<dbReference type="PANTHER" id="PTHR46499">
    <property type="entry name" value="QUEUINE TRNA-RIBOSYLTRANSFERASE"/>
    <property type="match status" value="1"/>
</dbReference>
<dbReference type="PANTHER" id="PTHR46499:SF1">
    <property type="entry name" value="QUEUINE TRNA-RIBOSYLTRANSFERASE"/>
    <property type="match status" value="1"/>
</dbReference>
<dbReference type="Pfam" id="PF01702">
    <property type="entry name" value="TGT"/>
    <property type="match status" value="1"/>
</dbReference>
<dbReference type="SUPFAM" id="SSF51713">
    <property type="entry name" value="tRNA-guanine transglycosylase"/>
    <property type="match status" value="1"/>
</dbReference>
<protein>
    <recommendedName>
        <fullName evidence="1">Queuine tRNA-ribosyltransferase</fullName>
        <ecNumber evidence="1">2.4.2.29</ecNumber>
    </recommendedName>
    <alternativeName>
        <fullName evidence="1">Guanine insertion enzyme</fullName>
    </alternativeName>
    <alternativeName>
        <fullName evidence="1">tRNA-guanine transglycosylase</fullName>
    </alternativeName>
</protein>
<gene>
    <name evidence="1" type="primary">tgt</name>
    <name type="ordered locus">CKO_02755</name>
</gene>
<accession>A8AK48</accession>
<keyword id="KW-0328">Glycosyltransferase</keyword>
<keyword id="KW-0479">Metal-binding</keyword>
<keyword id="KW-0671">Queuosine biosynthesis</keyword>
<keyword id="KW-1185">Reference proteome</keyword>
<keyword id="KW-0808">Transferase</keyword>
<keyword id="KW-0819">tRNA processing</keyword>
<keyword id="KW-0862">Zinc</keyword>
<proteinExistence type="inferred from homology"/>
<evidence type="ECO:0000255" key="1">
    <source>
        <dbReference type="HAMAP-Rule" id="MF_00168"/>
    </source>
</evidence>
<comment type="function">
    <text evidence="1">Catalyzes the base-exchange of a guanine (G) residue with the queuine precursor 7-aminomethyl-7-deazaguanine (PreQ1) at position 34 (anticodon wobble position) in tRNAs with GU(N) anticodons (tRNA-Asp, -Asn, -His and -Tyr). Catalysis occurs through a double-displacement mechanism. The nucleophile active site attacks the C1' of nucleotide 34 to detach the guanine base from the RNA, forming a covalent enzyme-RNA intermediate. The proton acceptor active site deprotonates the incoming PreQ1, allowing a nucleophilic attack on the C1' of the ribose to form the product. After dissociation, two additional enzymatic reactions on the tRNA convert PreQ1 to queuine (Q), resulting in the hypermodified nucleoside queuosine (7-(((4,5-cis-dihydroxy-2-cyclopenten-1-yl)amino)methyl)-7-deazaguanosine).</text>
</comment>
<comment type="catalytic activity">
    <reaction evidence="1">
        <text>7-aminomethyl-7-carbaguanine + guanosine(34) in tRNA = 7-aminomethyl-7-carbaguanosine(34) in tRNA + guanine</text>
        <dbReference type="Rhea" id="RHEA:24104"/>
        <dbReference type="Rhea" id="RHEA-COMP:10341"/>
        <dbReference type="Rhea" id="RHEA-COMP:10342"/>
        <dbReference type="ChEBI" id="CHEBI:16235"/>
        <dbReference type="ChEBI" id="CHEBI:58703"/>
        <dbReference type="ChEBI" id="CHEBI:74269"/>
        <dbReference type="ChEBI" id="CHEBI:82833"/>
        <dbReference type="EC" id="2.4.2.29"/>
    </reaction>
</comment>
<comment type="cofactor">
    <cofactor evidence="1">
        <name>Zn(2+)</name>
        <dbReference type="ChEBI" id="CHEBI:29105"/>
    </cofactor>
    <text evidence="1">Binds 1 zinc ion per subunit.</text>
</comment>
<comment type="pathway">
    <text evidence="1">tRNA modification; tRNA-queuosine biosynthesis.</text>
</comment>
<comment type="subunit">
    <text evidence="1">Homodimer. Within each dimer, one monomer is responsible for RNA recognition and catalysis, while the other monomer binds to the replacement base PreQ1.</text>
</comment>
<comment type="similarity">
    <text evidence="1">Belongs to the queuine tRNA-ribosyltransferase family.</text>
</comment>
<feature type="chain" id="PRO_1000016778" description="Queuine tRNA-ribosyltransferase">
    <location>
        <begin position="1"/>
        <end position="375"/>
    </location>
</feature>
<feature type="region of interest" description="RNA binding" evidence="1">
    <location>
        <begin position="245"/>
        <end position="251"/>
    </location>
</feature>
<feature type="region of interest" description="RNA binding; important for wobble base 34 recognition" evidence="1">
    <location>
        <begin position="269"/>
        <end position="273"/>
    </location>
</feature>
<feature type="active site" description="Proton acceptor" evidence="1">
    <location>
        <position position="89"/>
    </location>
</feature>
<feature type="active site" description="Nucleophile" evidence="1">
    <location>
        <position position="264"/>
    </location>
</feature>
<feature type="binding site" evidence="1">
    <location>
        <begin position="89"/>
        <end position="93"/>
    </location>
    <ligand>
        <name>substrate</name>
    </ligand>
</feature>
<feature type="binding site" evidence="1">
    <location>
        <position position="143"/>
    </location>
    <ligand>
        <name>substrate</name>
    </ligand>
</feature>
<feature type="binding site" evidence="1">
    <location>
        <position position="187"/>
    </location>
    <ligand>
        <name>substrate</name>
    </ligand>
</feature>
<feature type="binding site" evidence="1">
    <location>
        <position position="214"/>
    </location>
    <ligand>
        <name>substrate</name>
    </ligand>
</feature>
<feature type="binding site" evidence="1">
    <location>
        <position position="302"/>
    </location>
    <ligand>
        <name>Zn(2+)</name>
        <dbReference type="ChEBI" id="CHEBI:29105"/>
    </ligand>
</feature>
<feature type="binding site" evidence="1">
    <location>
        <position position="304"/>
    </location>
    <ligand>
        <name>Zn(2+)</name>
        <dbReference type="ChEBI" id="CHEBI:29105"/>
    </ligand>
</feature>
<feature type="binding site" evidence="1">
    <location>
        <position position="307"/>
    </location>
    <ligand>
        <name>Zn(2+)</name>
        <dbReference type="ChEBI" id="CHEBI:29105"/>
    </ligand>
</feature>
<feature type="binding site" evidence="1">
    <location>
        <position position="333"/>
    </location>
    <ligand>
        <name>Zn(2+)</name>
        <dbReference type="ChEBI" id="CHEBI:29105"/>
    </ligand>
</feature>
<organism>
    <name type="scientific">Citrobacter koseri (strain ATCC BAA-895 / CDC 4225-83 / SGSC4696)</name>
    <dbReference type="NCBI Taxonomy" id="290338"/>
    <lineage>
        <taxon>Bacteria</taxon>
        <taxon>Pseudomonadati</taxon>
        <taxon>Pseudomonadota</taxon>
        <taxon>Gammaproteobacteria</taxon>
        <taxon>Enterobacterales</taxon>
        <taxon>Enterobacteriaceae</taxon>
        <taxon>Citrobacter</taxon>
    </lineage>
</organism>
<name>TGT_CITK8</name>